<keyword id="KW-0007">Acetylation</keyword>
<keyword id="KW-0010">Activator</keyword>
<keyword id="KW-0325">Glycoprotein</keyword>
<keyword id="KW-1017">Isopeptide bond</keyword>
<keyword id="KW-0488">Methylation</keyword>
<keyword id="KW-0507">mRNA processing</keyword>
<keyword id="KW-0508">mRNA splicing</keyword>
<keyword id="KW-0539">Nucleus</keyword>
<keyword id="KW-0597">Phosphoprotein</keyword>
<keyword id="KW-1185">Reference proteome</keyword>
<keyword id="KW-0678">Repressor</keyword>
<keyword id="KW-0687">Ribonucleoprotein</keyword>
<keyword id="KW-0694">RNA-binding</keyword>
<keyword id="KW-0747">Spliceosome</keyword>
<keyword id="KW-0804">Transcription</keyword>
<keyword id="KW-0043">Tumor suppressor</keyword>
<keyword id="KW-0832">Ubl conjugation</keyword>
<gene>
    <name type="primary">RBMX</name>
</gene>
<comment type="function">
    <text evidence="1">RNA-binding protein that plays several role in the regulation of pre- and post-transcriptional processes. Implicated in tissue-specific regulation of gene transcription and alternative splicing of several pre-mRNAs. Binds to and stimulates transcription from the tumor suppressor TXNIP gene promoter; may thus be involved in tumor suppression. When associated with SAFB, binds to and stimulates transcription from the SREBF1 promoter. Associates with nascent mRNAs transcribed by RNA polymerase II. Component of the supraspliceosome complex that regulates pre-mRNA alternative splice site selection. Can either activate or suppress exon inclusion; acts additively with TRA2B to promote exon 7 inclusion of the survival motor neuron SMN2. Represses the splicing of MAPT/Tau exon 10. Binds preferentially to single-stranded 5'-CC[A/C]-rich RNA sequence motifs localized in a single-stranded conformation; probably binds RNA as a homodimer. Binds non-specifically to pre-mRNAs. Also plays a role in the cytoplasmic TNFR1 trafficking pathways; promotes both the IL-1-beta-mediated inducible proteolytic cleavage of TNFR1 ectodomains and the release of TNFR1 exosome-like vesicles to the extracellular compartment (By similarity).</text>
</comment>
<comment type="subunit">
    <text evidence="2 3">Homomultimer. Found in the supraspliceosome complex. Identified in the spliceosome C complex. Forms a complex with ILF2, ILF3, YLPM1, KHDRBS1, NCOA5 and PPP1CA. Interacts with CLK2, KHDRBS2, KHDRBS3, SAFB/SAFB1, TRA2B and YTHDC1. Interacts with ERAP1; the interaction is RNA-independent (By similarity). Interacts with PPIA/CYPA (By similarity).</text>
</comment>
<comment type="subcellular location">
    <subcellularLocation>
        <location>Nucleus</location>
    </subcellularLocation>
    <text evidence="1">Localizes in numerous small granules in the nucleus. Component of ribonucleosomes (By similarity).</text>
</comment>
<comment type="domain">
    <text evidence="1">The RRM domain is necessary for RNA-binding, but not for splice site selection, indicating that its splicing activity does not require direct binding to RNA.</text>
</comment>
<comment type="PTM">
    <text evidence="1">O-glycosylated.</text>
</comment>
<comment type="PTM">
    <text evidence="1">Arg-185 is dimethylated, probably to asymmetric dimethylarginine.</text>
</comment>
<sequence>MVEADRPGKLFIGGLNTETNEKALEAVFGKYGRIVEVLLMKDRETNKSRGFAFVTFESPADAKDAARDMNGKSLDGKAIKVEQATKPSFESGRRGPPPPPRSRGPPRGLRGGRGGSGGTRGPPSRGGHMDDGGYSMNFNMSSSRGPLPVKRGPPPRSGGPPPKRSAPSGPVRSSSGMGGRAPVSRGRDSYGGPPRREPLPSRRDVYLSPRDDGYSTKDSYSSRDYPSSRDTRDYAPPPRDYTYRDYGHSSSRDDYPSRGYSDRDGYGRDRDYSDHPSGGSYRDSYESYGNSRSAPPTRGPPPSYGGSSRYDDYSSSRDGYGGSRDSYSSSRSDLYSSGRDRVGRQERGLPPSMERGYPPPRDSYSSSSRGAPRGGGRGGSRSDRGGGRSRY</sequence>
<reference key="1">
    <citation type="journal article" date="2007" name="Gene">
        <title>Mapping of chimpanzee full-length cDNAs onto the human genome unveils large potential divergence of the transcriptome.</title>
        <authorList>
            <person name="Sakate R."/>
            <person name="Suto Y."/>
            <person name="Imanishi T."/>
            <person name="Tanoue T."/>
            <person name="Hida M."/>
            <person name="Hayasaka I."/>
            <person name="Kusuda J."/>
            <person name="Gojobori T."/>
            <person name="Hashimoto K."/>
            <person name="Hirai M."/>
        </authorList>
    </citation>
    <scope>NUCLEOTIDE SEQUENCE [MRNA]</scope>
    <source>
        <tissue>Skin</tissue>
    </source>
</reference>
<feature type="chain" id="PRO_0000309746" description="RNA-binding motif protein, X chromosome">
    <location>
        <begin position="1"/>
        <end position="391"/>
    </location>
</feature>
<feature type="initiator methionine" description="Removed; alternate" evidence="2">
    <location>
        <position position="1"/>
    </location>
</feature>
<feature type="chain" id="PRO_0000413016" description="RNA-binding motif protein, X chromosome, N-terminally processed">
    <location>
        <begin position="2"/>
        <end position="391"/>
    </location>
</feature>
<feature type="domain" description="RRM" evidence="4">
    <location>
        <begin position="8"/>
        <end position="86"/>
    </location>
</feature>
<feature type="region of interest" description="Disordered" evidence="5">
    <location>
        <begin position="61"/>
        <end position="391"/>
    </location>
</feature>
<feature type="region of interest" description="Necessary for the association to nascent RNAPII transcripts and nuclear localization" evidence="1">
    <location>
        <begin position="186"/>
        <end position="236"/>
    </location>
</feature>
<feature type="region of interest" description="Necessary for RNA-binding" evidence="1">
    <location>
        <begin position="333"/>
        <end position="391"/>
    </location>
</feature>
<feature type="compositionally biased region" description="Basic and acidic residues" evidence="5">
    <location>
        <begin position="61"/>
        <end position="80"/>
    </location>
</feature>
<feature type="compositionally biased region" description="Gly residues" evidence="5">
    <location>
        <begin position="109"/>
        <end position="120"/>
    </location>
</feature>
<feature type="compositionally biased region" description="Pro residues" evidence="5">
    <location>
        <begin position="151"/>
        <end position="164"/>
    </location>
</feature>
<feature type="compositionally biased region" description="Basic and acidic residues" evidence="5">
    <location>
        <begin position="194"/>
        <end position="215"/>
    </location>
</feature>
<feature type="compositionally biased region" description="Basic and acidic residues" evidence="5">
    <location>
        <begin position="241"/>
        <end position="274"/>
    </location>
</feature>
<feature type="compositionally biased region" description="Low complexity" evidence="5">
    <location>
        <begin position="323"/>
        <end position="337"/>
    </location>
</feature>
<feature type="compositionally biased region" description="Basic and acidic residues" evidence="5">
    <location>
        <begin position="338"/>
        <end position="347"/>
    </location>
</feature>
<feature type="compositionally biased region" description="Low complexity" evidence="5">
    <location>
        <begin position="362"/>
        <end position="371"/>
    </location>
</feature>
<feature type="compositionally biased region" description="Basic and acidic residues" evidence="5">
    <location>
        <begin position="380"/>
        <end position="391"/>
    </location>
</feature>
<feature type="modified residue" description="N-acetylmethionine; in Heterogeneous nuclear ribonucleoprotein G; alternate" evidence="2">
    <location>
        <position position="1"/>
    </location>
</feature>
<feature type="modified residue" description="N-acetylvaline; in Heterogeneous nuclear ribonucleoprotein G, N-terminally processed" evidence="2">
    <location>
        <position position="2"/>
    </location>
</feature>
<feature type="modified residue" description="N6-acetyllysine" evidence="2">
    <location>
        <position position="30"/>
    </location>
</feature>
<feature type="modified residue" description="Phosphoserine" evidence="2">
    <location>
        <position position="88"/>
    </location>
</feature>
<feature type="modified residue" description="Phosphoserine" evidence="2">
    <location>
        <position position="91"/>
    </location>
</feature>
<feature type="modified residue" description="Omega-N-methylarginine" evidence="3">
    <location>
        <position position="125"/>
    </location>
</feature>
<feature type="modified residue" description="Omega-N-methylarginine" evidence="3">
    <location>
        <position position="144"/>
    </location>
</feature>
<feature type="modified residue" description="Omega-N-methylarginine" evidence="3">
    <location>
        <position position="164"/>
    </location>
</feature>
<feature type="modified residue" description="Phosphoserine" evidence="2">
    <location>
        <position position="165"/>
    </location>
</feature>
<feature type="modified residue" description="Omega-N-methylarginine" evidence="3">
    <location>
        <position position="172"/>
    </location>
</feature>
<feature type="modified residue" description="Phosphoserine" evidence="2">
    <location>
        <position position="174"/>
    </location>
</feature>
<feature type="modified residue" description="Phosphoserine" evidence="2">
    <location>
        <position position="261"/>
    </location>
</feature>
<feature type="modified residue" description="Phosphoserine" evidence="2">
    <location>
        <position position="328"/>
    </location>
</feature>
<feature type="modified residue" description="Phosphoserine" evidence="2">
    <location>
        <position position="329"/>
    </location>
</feature>
<feature type="modified residue" description="Phosphoserine" evidence="2">
    <location>
        <position position="330"/>
    </location>
</feature>
<feature type="modified residue" description="Phosphoserine" evidence="2">
    <location>
        <position position="332"/>
    </location>
</feature>
<feature type="modified residue" description="Phosphoserine" evidence="2">
    <location>
        <position position="352"/>
    </location>
</feature>
<feature type="cross-link" description="Glycyl lysine isopeptide (Lys-Gly) (interchain with G-Cter in SUMO2)" evidence="2">
    <location>
        <position position="22"/>
    </location>
</feature>
<feature type="cross-link" description="Glycyl lysine isopeptide (Lys-Gly) (interchain with G-Cter in SUMO2)" evidence="2">
    <location>
        <position position="80"/>
    </location>
</feature>
<feature type="cross-link" description="Glycyl lysine isopeptide (Lys-Gly) (interchain with G-Cter in SUMO2)" evidence="2">
    <location>
        <position position="86"/>
    </location>
</feature>
<proteinExistence type="evidence at transcript level"/>
<evidence type="ECO:0000250" key="1"/>
<evidence type="ECO:0000250" key="2">
    <source>
        <dbReference type="UniProtKB" id="P38159"/>
    </source>
</evidence>
<evidence type="ECO:0000250" key="3">
    <source>
        <dbReference type="UniProtKB" id="Q9WV02"/>
    </source>
</evidence>
<evidence type="ECO:0000255" key="4">
    <source>
        <dbReference type="PROSITE-ProRule" id="PRU00176"/>
    </source>
</evidence>
<evidence type="ECO:0000256" key="5">
    <source>
        <dbReference type="SAM" id="MobiDB-lite"/>
    </source>
</evidence>
<organism>
    <name type="scientific">Pan troglodytes</name>
    <name type="common">Chimpanzee</name>
    <dbReference type="NCBI Taxonomy" id="9598"/>
    <lineage>
        <taxon>Eukaryota</taxon>
        <taxon>Metazoa</taxon>
        <taxon>Chordata</taxon>
        <taxon>Craniata</taxon>
        <taxon>Vertebrata</taxon>
        <taxon>Euteleostomi</taxon>
        <taxon>Mammalia</taxon>
        <taxon>Eutheria</taxon>
        <taxon>Euarchontoglires</taxon>
        <taxon>Primates</taxon>
        <taxon>Haplorrhini</taxon>
        <taxon>Catarrhini</taxon>
        <taxon>Hominidae</taxon>
        <taxon>Pan</taxon>
    </lineage>
</organism>
<protein>
    <recommendedName>
        <fullName>RNA-binding motif protein, X chromosome</fullName>
    </recommendedName>
    <alternativeName>
        <fullName>Heterogeneous nuclear ribonucleoprotein G</fullName>
        <shortName>hnRNP G</shortName>
    </alternativeName>
    <component>
        <recommendedName>
            <fullName>RNA-binding motif protein, X chromosome, N-terminally processed</fullName>
        </recommendedName>
    </component>
</protein>
<name>RBMX_PANTR</name>
<dbReference type="EMBL" id="AB222151">
    <property type="protein sequence ID" value="BAF62396.1"/>
    <property type="molecule type" value="mRNA"/>
</dbReference>
<dbReference type="RefSeq" id="NP_001128678.1">
    <property type="nucleotide sequence ID" value="NM_001135206.1"/>
</dbReference>
<dbReference type="RefSeq" id="XP_016798172.1">
    <property type="nucleotide sequence ID" value="XM_016942683.1"/>
</dbReference>
<dbReference type="RefSeq" id="XP_063659902.1">
    <property type="nucleotide sequence ID" value="XM_063803832.1"/>
</dbReference>
<dbReference type="BMRB" id="A5A6M3"/>
<dbReference type="SMR" id="A5A6M3"/>
<dbReference type="FunCoup" id="A5A6M3">
    <property type="interactions" value="2289"/>
</dbReference>
<dbReference type="IntAct" id="A5A6M3">
    <property type="interactions" value="1"/>
</dbReference>
<dbReference type="STRING" id="9598.ENSPTRP00000077078"/>
<dbReference type="Ensembl" id="ENSPTRT00000088375.1">
    <property type="protein sequence ID" value="ENSPTRP00000077078.1"/>
    <property type="gene ID" value="ENSPTRG00000052587.1"/>
</dbReference>
<dbReference type="GeneID" id="738482"/>
<dbReference type="KEGG" id="ptr:738482"/>
<dbReference type="CTD" id="27316"/>
<dbReference type="VGNC" id="VGNC:55726">
    <property type="gene designation" value="RBMX"/>
</dbReference>
<dbReference type="eggNOG" id="ENOG502QS9N">
    <property type="taxonomic scope" value="Eukaryota"/>
</dbReference>
<dbReference type="GeneTree" id="ENSGT00940000153425"/>
<dbReference type="InParanoid" id="A5A6M3"/>
<dbReference type="OMA" id="HEGFFMG"/>
<dbReference type="OrthoDB" id="17264at9604"/>
<dbReference type="Proteomes" id="UP000002277">
    <property type="component" value="Chromosome X"/>
</dbReference>
<dbReference type="Bgee" id="ENSPTRG00000052587">
    <property type="expression patterns" value="Expressed in thymus and 20 other cell types or tissues"/>
</dbReference>
<dbReference type="GO" id="GO:0071013">
    <property type="term" value="C:catalytic step 2 spliceosome"/>
    <property type="evidence" value="ECO:0000250"/>
    <property type="project" value="UniProtKB"/>
</dbReference>
<dbReference type="GO" id="GO:0000791">
    <property type="term" value="C:euchromatin"/>
    <property type="evidence" value="ECO:0000250"/>
    <property type="project" value="UniProtKB"/>
</dbReference>
<dbReference type="GO" id="GO:0070062">
    <property type="term" value="C:extracellular exosome"/>
    <property type="evidence" value="ECO:0000250"/>
    <property type="project" value="UniProtKB"/>
</dbReference>
<dbReference type="GO" id="GO:0005634">
    <property type="term" value="C:nucleus"/>
    <property type="evidence" value="ECO:0000250"/>
    <property type="project" value="UniProtKB"/>
</dbReference>
<dbReference type="GO" id="GO:0005681">
    <property type="term" value="C:spliceosomal complex"/>
    <property type="evidence" value="ECO:0000318"/>
    <property type="project" value="GO_Central"/>
</dbReference>
<dbReference type="GO" id="GO:0044530">
    <property type="term" value="C:supraspliceosomal complex"/>
    <property type="evidence" value="ECO:0000250"/>
    <property type="project" value="UniProtKB"/>
</dbReference>
<dbReference type="GO" id="GO:0003682">
    <property type="term" value="F:chromatin binding"/>
    <property type="evidence" value="ECO:0000250"/>
    <property type="project" value="UniProtKB"/>
</dbReference>
<dbReference type="GO" id="GO:0003729">
    <property type="term" value="F:mRNA binding"/>
    <property type="evidence" value="ECO:0000250"/>
    <property type="project" value="UniProtKB"/>
</dbReference>
<dbReference type="GO" id="GO:0003723">
    <property type="term" value="F:RNA binding"/>
    <property type="evidence" value="ECO:0000250"/>
    <property type="project" value="UniProtKB"/>
</dbReference>
<dbReference type="GO" id="GO:0000978">
    <property type="term" value="F:RNA polymerase II cis-regulatory region sequence-specific DNA binding"/>
    <property type="evidence" value="ECO:0000250"/>
    <property type="project" value="UniProtKB"/>
</dbReference>
<dbReference type="GO" id="GO:0071347">
    <property type="term" value="P:cellular response to interleukin-1"/>
    <property type="evidence" value="ECO:0000250"/>
    <property type="project" value="UniProtKB"/>
</dbReference>
<dbReference type="GO" id="GO:0006509">
    <property type="term" value="P:membrane protein ectodomain proteolysis"/>
    <property type="evidence" value="ECO:0000250"/>
    <property type="project" value="UniProtKB"/>
</dbReference>
<dbReference type="GO" id="GO:0006397">
    <property type="term" value="P:mRNA processing"/>
    <property type="evidence" value="ECO:0007669"/>
    <property type="project" value="UniProtKB-KW"/>
</dbReference>
<dbReference type="GO" id="GO:0048025">
    <property type="term" value="P:negative regulation of mRNA splicing, via spliceosome"/>
    <property type="evidence" value="ECO:0000250"/>
    <property type="project" value="UniProtKB"/>
</dbReference>
<dbReference type="GO" id="GO:0048026">
    <property type="term" value="P:positive regulation of mRNA splicing, via spliceosome"/>
    <property type="evidence" value="ECO:0000250"/>
    <property type="project" value="UniProtKB"/>
</dbReference>
<dbReference type="GO" id="GO:0045944">
    <property type="term" value="P:positive regulation of transcription by RNA polymerase II"/>
    <property type="evidence" value="ECO:0000250"/>
    <property type="project" value="UniProtKB"/>
</dbReference>
<dbReference type="GO" id="GO:0051260">
    <property type="term" value="P:protein homooligomerization"/>
    <property type="evidence" value="ECO:0000250"/>
    <property type="project" value="UniProtKB"/>
</dbReference>
<dbReference type="GO" id="GO:0000381">
    <property type="term" value="P:regulation of alternative mRNA splicing, via spliceosome"/>
    <property type="evidence" value="ECO:0000250"/>
    <property type="project" value="UniProtKB"/>
</dbReference>
<dbReference type="GO" id="GO:0008380">
    <property type="term" value="P:RNA splicing"/>
    <property type="evidence" value="ECO:0007669"/>
    <property type="project" value="UniProtKB-KW"/>
</dbReference>
<dbReference type="GO" id="GO:0006366">
    <property type="term" value="P:transcription by RNA polymerase II"/>
    <property type="evidence" value="ECO:0000250"/>
    <property type="project" value="UniProtKB"/>
</dbReference>
<dbReference type="CDD" id="cd12382">
    <property type="entry name" value="RRM_RBMX_like"/>
    <property type="match status" value="1"/>
</dbReference>
<dbReference type="FunFam" id="3.30.70.330:FF:000119">
    <property type="entry name" value="RNA-binding motif protein, X chromosome"/>
    <property type="match status" value="1"/>
</dbReference>
<dbReference type="Gene3D" id="3.30.70.330">
    <property type="match status" value="1"/>
</dbReference>
<dbReference type="InterPro" id="IPR012677">
    <property type="entry name" value="Nucleotide-bd_a/b_plait_sf"/>
</dbReference>
<dbReference type="InterPro" id="IPR035979">
    <property type="entry name" value="RBD_domain_sf"/>
</dbReference>
<dbReference type="InterPro" id="IPR050441">
    <property type="entry name" value="RBM"/>
</dbReference>
<dbReference type="InterPro" id="IPR012604">
    <property type="entry name" value="RBM1CTR"/>
</dbReference>
<dbReference type="InterPro" id="IPR000504">
    <property type="entry name" value="RRM_dom"/>
</dbReference>
<dbReference type="InterPro" id="IPR003954">
    <property type="entry name" value="RRM_dom_euk"/>
</dbReference>
<dbReference type="PANTHER" id="PTHR48034">
    <property type="entry name" value="TRANSFORMER-2 SEX-DETERMINING PROTEIN-RELATED"/>
    <property type="match status" value="1"/>
</dbReference>
<dbReference type="Pfam" id="PF08081">
    <property type="entry name" value="RBM1CTR"/>
    <property type="match status" value="1"/>
</dbReference>
<dbReference type="Pfam" id="PF00076">
    <property type="entry name" value="RRM_1"/>
    <property type="match status" value="1"/>
</dbReference>
<dbReference type="SMART" id="SM00360">
    <property type="entry name" value="RRM"/>
    <property type="match status" value="1"/>
</dbReference>
<dbReference type="SMART" id="SM00361">
    <property type="entry name" value="RRM_1"/>
    <property type="match status" value="1"/>
</dbReference>
<dbReference type="SUPFAM" id="SSF54928">
    <property type="entry name" value="RNA-binding domain, RBD"/>
    <property type="match status" value="1"/>
</dbReference>
<dbReference type="PROSITE" id="PS50102">
    <property type="entry name" value="RRM"/>
    <property type="match status" value="1"/>
</dbReference>
<accession>A5A6M3</accession>